<reference key="1">
    <citation type="journal article" date="2010" name="Genome Biol. Evol.">
        <title>Continuing evolution of Burkholderia mallei through genome reduction and large-scale rearrangements.</title>
        <authorList>
            <person name="Losada L."/>
            <person name="Ronning C.M."/>
            <person name="DeShazer D."/>
            <person name="Woods D."/>
            <person name="Fedorova N."/>
            <person name="Kim H.S."/>
            <person name="Shabalina S.A."/>
            <person name="Pearson T.R."/>
            <person name="Brinkac L."/>
            <person name="Tan P."/>
            <person name="Nandi T."/>
            <person name="Crabtree J."/>
            <person name="Badger J."/>
            <person name="Beckstrom-Sternberg S."/>
            <person name="Saqib M."/>
            <person name="Schutzer S.E."/>
            <person name="Keim P."/>
            <person name="Nierman W.C."/>
        </authorList>
    </citation>
    <scope>NUCLEOTIDE SEQUENCE [LARGE SCALE GENOMIC DNA]</scope>
    <source>
        <strain>SAVP1</strain>
    </source>
</reference>
<gene>
    <name evidence="2" type="primary">tal</name>
    <name type="ordered locus">BMASAVP1_A1013</name>
</gene>
<evidence type="ECO:0000250" key="1"/>
<evidence type="ECO:0000255" key="2">
    <source>
        <dbReference type="HAMAP-Rule" id="MF_00492"/>
    </source>
</evidence>
<keyword id="KW-0963">Cytoplasm</keyword>
<keyword id="KW-0570">Pentose shunt</keyword>
<keyword id="KW-0704">Schiff base</keyword>
<keyword id="KW-0808">Transferase</keyword>
<feature type="chain" id="PRO_1000014491" description="Transaldolase">
    <location>
        <begin position="1"/>
        <end position="317"/>
    </location>
</feature>
<feature type="active site" description="Schiff-base intermediate with substrate" evidence="2">
    <location>
        <position position="126"/>
    </location>
</feature>
<protein>
    <recommendedName>
        <fullName evidence="2">Transaldolase</fullName>
        <ecNumber evidence="2">2.2.1.2</ecNumber>
    </recommendedName>
</protein>
<organism>
    <name type="scientific">Burkholderia mallei (strain SAVP1)</name>
    <dbReference type="NCBI Taxonomy" id="320388"/>
    <lineage>
        <taxon>Bacteria</taxon>
        <taxon>Pseudomonadati</taxon>
        <taxon>Pseudomonadota</taxon>
        <taxon>Betaproteobacteria</taxon>
        <taxon>Burkholderiales</taxon>
        <taxon>Burkholderiaceae</taxon>
        <taxon>Burkholderia</taxon>
        <taxon>pseudomallei group</taxon>
    </lineage>
</organism>
<sequence length="317" mass="35401">MTTALDQLKQYTTVVADTGDFQQLAQYKPQDATTNPSLILKAVQKDAYRPILEKTVRDHAGESVGFIIDRLLIAFGTEILKLIPGRVSTEVDARLSFDTQRSIDKGREIIKLYEAAGVGRERVLIKLASTWEGIRAAEVLQREGIRCNMTLLFSLVQAAACAEAGAQLISPFVGRIYDWYRKQKGADWDEAQDGGANDPGVQSVRRIYTYYKHFGYRTEVMGASFRTTSQITELAGCDLLTISPELLQKLHDSTEAVARKLSPDEARDARLERVAIDESSFRFQLNDDAMATEKLAEGIRLFSADAVKLEKMIEALR</sequence>
<dbReference type="EC" id="2.2.1.2" evidence="2"/>
<dbReference type="EMBL" id="CP000526">
    <property type="protein sequence ID" value="ABM49576.1"/>
    <property type="molecule type" value="Genomic_DNA"/>
</dbReference>
<dbReference type="RefSeq" id="WP_004186409.1">
    <property type="nucleotide sequence ID" value="NC_008785.1"/>
</dbReference>
<dbReference type="SMR" id="A1V2A0"/>
<dbReference type="GeneID" id="92979654"/>
<dbReference type="KEGG" id="bmv:BMASAVP1_A1013"/>
<dbReference type="HOGENOM" id="CLU_047470_0_1_4"/>
<dbReference type="UniPathway" id="UPA00115">
    <property type="reaction ID" value="UER00414"/>
</dbReference>
<dbReference type="GO" id="GO:0005737">
    <property type="term" value="C:cytoplasm"/>
    <property type="evidence" value="ECO:0007669"/>
    <property type="project" value="UniProtKB-SubCell"/>
</dbReference>
<dbReference type="GO" id="GO:0004801">
    <property type="term" value="F:transaldolase activity"/>
    <property type="evidence" value="ECO:0000250"/>
    <property type="project" value="UniProtKB"/>
</dbReference>
<dbReference type="GO" id="GO:0005975">
    <property type="term" value="P:carbohydrate metabolic process"/>
    <property type="evidence" value="ECO:0007669"/>
    <property type="project" value="InterPro"/>
</dbReference>
<dbReference type="GO" id="GO:0009052">
    <property type="term" value="P:pentose-phosphate shunt, non-oxidative branch"/>
    <property type="evidence" value="ECO:0007669"/>
    <property type="project" value="TreeGrafter"/>
</dbReference>
<dbReference type="CDD" id="cd00957">
    <property type="entry name" value="Transaldolase_TalAB"/>
    <property type="match status" value="1"/>
</dbReference>
<dbReference type="FunFam" id="3.20.20.70:FF:000002">
    <property type="entry name" value="Transaldolase"/>
    <property type="match status" value="1"/>
</dbReference>
<dbReference type="Gene3D" id="3.20.20.70">
    <property type="entry name" value="Aldolase class I"/>
    <property type="match status" value="1"/>
</dbReference>
<dbReference type="HAMAP" id="MF_00492">
    <property type="entry name" value="Transaldolase_1"/>
    <property type="match status" value="1"/>
</dbReference>
<dbReference type="InterPro" id="IPR013785">
    <property type="entry name" value="Aldolase_TIM"/>
</dbReference>
<dbReference type="InterPro" id="IPR001585">
    <property type="entry name" value="TAL/FSA"/>
</dbReference>
<dbReference type="InterPro" id="IPR004730">
    <property type="entry name" value="Transaldolase_1"/>
</dbReference>
<dbReference type="InterPro" id="IPR018225">
    <property type="entry name" value="Transaldolase_AS"/>
</dbReference>
<dbReference type="NCBIfam" id="TIGR00874">
    <property type="entry name" value="talAB"/>
    <property type="match status" value="1"/>
</dbReference>
<dbReference type="PANTHER" id="PTHR10683">
    <property type="entry name" value="TRANSALDOLASE"/>
    <property type="match status" value="1"/>
</dbReference>
<dbReference type="PANTHER" id="PTHR10683:SF18">
    <property type="entry name" value="TRANSALDOLASE"/>
    <property type="match status" value="1"/>
</dbReference>
<dbReference type="Pfam" id="PF00923">
    <property type="entry name" value="TAL_FSA"/>
    <property type="match status" value="1"/>
</dbReference>
<dbReference type="SUPFAM" id="SSF51569">
    <property type="entry name" value="Aldolase"/>
    <property type="match status" value="1"/>
</dbReference>
<dbReference type="PROSITE" id="PS01054">
    <property type="entry name" value="TRANSALDOLASE_1"/>
    <property type="match status" value="1"/>
</dbReference>
<dbReference type="PROSITE" id="PS00958">
    <property type="entry name" value="TRANSALDOLASE_2"/>
    <property type="match status" value="1"/>
</dbReference>
<proteinExistence type="inferred from homology"/>
<comment type="function">
    <text evidence="2">Transaldolase is important for the balance of metabolites in the pentose-phosphate pathway.</text>
</comment>
<comment type="catalytic activity">
    <reaction evidence="2">
        <text>D-sedoheptulose 7-phosphate + D-glyceraldehyde 3-phosphate = D-erythrose 4-phosphate + beta-D-fructose 6-phosphate</text>
        <dbReference type="Rhea" id="RHEA:17053"/>
        <dbReference type="ChEBI" id="CHEBI:16897"/>
        <dbReference type="ChEBI" id="CHEBI:57483"/>
        <dbReference type="ChEBI" id="CHEBI:57634"/>
        <dbReference type="ChEBI" id="CHEBI:59776"/>
        <dbReference type="EC" id="2.2.1.2"/>
    </reaction>
</comment>
<comment type="pathway">
    <text evidence="2">Carbohydrate degradation; pentose phosphate pathway; D-glyceraldehyde 3-phosphate and beta-D-fructose 6-phosphate from D-ribose 5-phosphate and D-xylulose 5-phosphate (non-oxidative stage): step 2/3.</text>
</comment>
<comment type="subunit">
    <text evidence="1">Homodimer.</text>
</comment>
<comment type="subcellular location">
    <subcellularLocation>
        <location evidence="2">Cytoplasm</location>
    </subcellularLocation>
</comment>
<comment type="similarity">
    <text evidence="2">Belongs to the transaldolase family. Type 1 subfamily.</text>
</comment>
<accession>A1V2A0</accession>
<name>TAL_BURMS</name>